<feature type="chain" id="PRO_0000141793" description="3-isopropylmalate dehydratase small subunit 2">
    <location>
        <begin position="1"/>
        <end position="216"/>
    </location>
</feature>
<organism>
    <name type="scientific">Bordetella pertussis (strain Tohama I / ATCC BAA-589 / NCTC 13251)</name>
    <dbReference type="NCBI Taxonomy" id="257313"/>
    <lineage>
        <taxon>Bacteria</taxon>
        <taxon>Pseudomonadati</taxon>
        <taxon>Pseudomonadota</taxon>
        <taxon>Betaproteobacteria</taxon>
        <taxon>Burkholderiales</taxon>
        <taxon>Alcaligenaceae</taxon>
        <taxon>Bordetella</taxon>
    </lineage>
</organism>
<protein>
    <recommendedName>
        <fullName evidence="1">3-isopropylmalate dehydratase small subunit 2</fullName>
        <ecNumber evidence="1">4.2.1.33</ecNumber>
    </recommendedName>
    <alternativeName>
        <fullName evidence="1">Alpha-IPM isomerase 2</fullName>
        <shortName evidence="1">IPMI 2</shortName>
    </alternativeName>
    <alternativeName>
        <fullName evidence="1">Isopropylmalate isomerase 2</fullName>
    </alternativeName>
</protein>
<name>LEUD2_BORPE</name>
<comment type="function">
    <text evidence="1">Catalyzes the isomerization between 2-isopropylmalate and 3-isopropylmalate, via the formation of 2-isopropylmaleate.</text>
</comment>
<comment type="catalytic activity">
    <reaction evidence="1">
        <text>(2R,3S)-3-isopropylmalate = (2S)-2-isopropylmalate</text>
        <dbReference type="Rhea" id="RHEA:32287"/>
        <dbReference type="ChEBI" id="CHEBI:1178"/>
        <dbReference type="ChEBI" id="CHEBI:35121"/>
        <dbReference type="EC" id="4.2.1.33"/>
    </reaction>
</comment>
<comment type="pathway">
    <text evidence="1">Amino-acid biosynthesis; L-leucine biosynthesis; L-leucine from 3-methyl-2-oxobutanoate: step 2/4.</text>
</comment>
<comment type="subunit">
    <text evidence="1">Heterodimer of LeuC and LeuD.</text>
</comment>
<comment type="similarity">
    <text evidence="1">Belongs to the LeuD family. LeuD type 1 subfamily.</text>
</comment>
<sequence length="216" mass="24490">MQAFTQHEGLVALLDRENVDTDLIIPKQFLKSIKRAGFGPNLFDELRYLDHGEPGMDNSKRPLNSDFVLNQPRYQGASVLLARKNFGCGSSREHAPWALTQYGFRAIIAPSYADIFFNNSFKNGLLPIVLGELEVARLFDEVKAFPGFKLNIDLERQVVIAPDGRELGFDIEPFRKYCLLNGLDDIGLTLRQADKIRAFEAERLARHPWLESRPVA</sequence>
<accession>Q7VY74</accession>
<dbReference type="EC" id="4.2.1.33" evidence="1"/>
<dbReference type="EMBL" id="BX640415">
    <property type="protein sequence ID" value="CAE41771.1"/>
    <property type="molecule type" value="Genomic_DNA"/>
</dbReference>
<dbReference type="RefSeq" id="NP_880219.1">
    <property type="nucleotide sequence ID" value="NC_002929.2"/>
</dbReference>
<dbReference type="SMR" id="Q7VY74"/>
<dbReference type="STRING" id="257313.BP1482"/>
<dbReference type="PaxDb" id="257313-BP1482"/>
<dbReference type="KEGG" id="bpe:BP1482"/>
<dbReference type="PATRIC" id="fig|257313.5.peg.1590"/>
<dbReference type="eggNOG" id="COG0066">
    <property type="taxonomic scope" value="Bacteria"/>
</dbReference>
<dbReference type="HOGENOM" id="CLU_081378_0_3_4"/>
<dbReference type="UniPathway" id="UPA00048">
    <property type="reaction ID" value="UER00071"/>
</dbReference>
<dbReference type="Proteomes" id="UP000002676">
    <property type="component" value="Chromosome"/>
</dbReference>
<dbReference type="GO" id="GO:0009316">
    <property type="term" value="C:3-isopropylmalate dehydratase complex"/>
    <property type="evidence" value="ECO:0007669"/>
    <property type="project" value="InterPro"/>
</dbReference>
<dbReference type="GO" id="GO:0003861">
    <property type="term" value="F:3-isopropylmalate dehydratase activity"/>
    <property type="evidence" value="ECO:0007669"/>
    <property type="project" value="UniProtKB-UniRule"/>
</dbReference>
<dbReference type="GO" id="GO:0009098">
    <property type="term" value="P:L-leucine biosynthetic process"/>
    <property type="evidence" value="ECO:0007669"/>
    <property type="project" value="UniProtKB-UniRule"/>
</dbReference>
<dbReference type="CDD" id="cd01577">
    <property type="entry name" value="IPMI_Swivel"/>
    <property type="match status" value="1"/>
</dbReference>
<dbReference type="FunFam" id="3.20.19.10:FF:000003">
    <property type="entry name" value="3-isopropylmalate dehydratase small subunit"/>
    <property type="match status" value="1"/>
</dbReference>
<dbReference type="Gene3D" id="3.20.19.10">
    <property type="entry name" value="Aconitase, domain 4"/>
    <property type="match status" value="1"/>
</dbReference>
<dbReference type="HAMAP" id="MF_01031">
    <property type="entry name" value="LeuD_type1"/>
    <property type="match status" value="1"/>
</dbReference>
<dbReference type="InterPro" id="IPR004431">
    <property type="entry name" value="3-IsopropMal_deHydase_ssu"/>
</dbReference>
<dbReference type="InterPro" id="IPR015928">
    <property type="entry name" value="Aconitase/3IPM_dehydase_swvl"/>
</dbReference>
<dbReference type="InterPro" id="IPR000573">
    <property type="entry name" value="AconitaseA/IPMdHydase_ssu_swvl"/>
</dbReference>
<dbReference type="InterPro" id="IPR033940">
    <property type="entry name" value="IPMI_Swivel"/>
</dbReference>
<dbReference type="InterPro" id="IPR050075">
    <property type="entry name" value="LeuD"/>
</dbReference>
<dbReference type="NCBIfam" id="TIGR00171">
    <property type="entry name" value="leuD"/>
    <property type="match status" value="1"/>
</dbReference>
<dbReference type="NCBIfam" id="NF002458">
    <property type="entry name" value="PRK01641.1"/>
    <property type="match status" value="1"/>
</dbReference>
<dbReference type="PANTHER" id="PTHR43345:SF5">
    <property type="entry name" value="3-ISOPROPYLMALATE DEHYDRATASE SMALL SUBUNIT"/>
    <property type="match status" value="1"/>
</dbReference>
<dbReference type="PANTHER" id="PTHR43345">
    <property type="entry name" value="3-ISOPROPYLMALATE DEHYDRATASE SMALL SUBUNIT 2-RELATED-RELATED"/>
    <property type="match status" value="1"/>
</dbReference>
<dbReference type="Pfam" id="PF00694">
    <property type="entry name" value="Aconitase_C"/>
    <property type="match status" value="1"/>
</dbReference>
<dbReference type="SUPFAM" id="SSF52016">
    <property type="entry name" value="LeuD/IlvD-like"/>
    <property type="match status" value="1"/>
</dbReference>
<reference key="1">
    <citation type="journal article" date="2003" name="Nat. Genet.">
        <title>Comparative analysis of the genome sequences of Bordetella pertussis, Bordetella parapertussis and Bordetella bronchiseptica.</title>
        <authorList>
            <person name="Parkhill J."/>
            <person name="Sebaihia M."/>
            <person name="Preston A."/>
            <person name="Murphy L.D."/>
            <person name="Thomson N.R."/>
            <person name="Harris D.E."/>
            <person name="Holden M.T.G."/>
            <person name="Churcher C.M."/>
            <person name="Bentley S.D."/>
            <person name="Mungall K.L."/>
            <person name="Cerdeno-Tarraga A.-M."/>
            <person name="Temple L."/>
            <person name="James K.D."/>
            <person name="Harris B."/>
            <person name="Quail M.A."/>
            <person name="Achtman M."/>
            <person name="Atkin R."/>
            <person name="Baker S."/>
            <person name="Basham D."/>
            <person name="Bason N."/>
            <person name="Cherevach I."/>
            <person name="Chillingworth T."/>
            <person name="Collins M."/>
            <person name="Cronin A."/>
            <person name="Davis P."/>
            <person name="Doggett J."/>
            <person name="Feltwell T."/>
            <person name="Goble A."/>
            <person name="Hamlin N."/>
            <person name="Hauser H."/>
            <person name="Holroyd S."/>
            <person name="Jagels K."/>
            <person name="Leather S."/>
            <person name="Moule S."/>
            <person name="Norberczak H."/>
            <person name="O'Neil S."/>
            <person name="Ormond D."/>
            <person name="Price C."/>
            <person name="Rabbinowitsch E."/>
            <person name="Rutter S."/>
            <person name="Sanders M."/>
            <person name="Saunders D."/>
            <person name="Seeger K."/>
            <person name="Sharp S."/>
            <person name="Simmonds M."/>
            <person name="Skelton J."/>
            <person name="Squares R."/>
            <person name="Squares S."/>
            <person name="Stevens K."/>
            <person name="Unwin L."/>
            <person name="Whitehead S."/>
            <person name="Barrell B.G."/>
            <person name="Maskell D.J."/>
        </authorList>
    </citation>
    <scope>NUCLEOTIDE SEQUENCE [LARGE SCALE GENOMIC DNA]</scope>
    <source>
        <strain>Tohama I / ATCC BAA-589 / NCTC 13251</strain>
    </source>
</reference>
<gene>
    <name evidence="1" type="primary">leuD2</name>
    <name type="ordered locus">BP1482</name>
</gene>
<keyword id="KW-0028">Amino-acid biosynthesis</keyword>
<keyword id="KW-0100">Branched-chain amino acid biosynthesis</keyword>
<keyword id="KW-0432">Leucine biosynthesis</keyword>
<keyword id="KW-0456">Lyase</keyword>
<keyword id="KW-1185">Reference proteome</keyword>
<proteinExistence type="inferred from homology"/>
<evidence type="ECO:0000255" key="1">
    <source>
        <dbReference type="HAMAP-Rule" id="MF_01031"/>
    </source>
</evidence>